<feature type="chain" id="PRO_1000200009" description="Putative manganese efflux pump MntP">
    <location>
        <begin position="1"/>
        <end position="182"/>
    </location>
</feature>
<feature type="transmembrane region" description="Helical" evidence="1">
    <location>
        <begin position="6"/>
        <end position="26"/>
    </location>
</feature>
<feature type="transmembrane region" description="Helical" evidence="1">
    <location>
        <begin position="37"/>
        <end position="57"/>
    </location>
</feature>
<feature type="transmembrane region" description="Helical" evidence="1">
    <location>
        <begin position="71"/>
        <end position="91"/>
    </location>
</feature>
<feature type="transmembrane region" description="Helical" evidence="1">
    <location>
        <begin position="101"/>
        <end position="121"/>
    </location>
</feature>
<feature type="transmembrane region" description="Helical" evidence="1">
    <location>
        <begin position="131"/>
        <end position="151"/>
    </location>
</feature>
<feature type="transmembrane region" description="Helical" evidence="1">
    <location>
        <begin position="162"/>
        <end position="182"/>
    </location>
</feature>
<name>MNTP_BACC7</name>
<reference key="1">
    <citation type="submission" date="2008-10" db="EMBL/GenBank/DDBJ databases">
        <title>Genome sequence of Bacillus cereus AH187.</title>
        <authorList>
            <person name="Dodson R.J."/>
            <person name="Durkin A.S."/>
            <person name="Rosovitz M.J."/>
            <person name="Rasko D.A."/>
            <person name="Kolsto A.B."/>
            <person name="Okstad O.A."/>
            <person name="Ravel J."/>
            <person name="Sutton G."/>
        </authorList>
    </citation>
    <scope>NUCLEOTIDE SEQUENCE [LARGE SCALE GENOMIC DNA]</scope>
    <source>
        <strain>AH187</strain>
    </source>
</reference>
<keyword id="KW-1003">Cell membrane</keyword>
<keyword id="KW-0406">Ion transport</keyword>
<keyword id="KW-0464">Manganese</keyword>
<keyword id="KW-0472">Membrane</keyword>
<keyword id="KW-0812">Transmembrane</keyword>
<keyword id="KW-1133">Transmembrane helix</keyword>
<keyword id="KW-0813">Transport</keyword>
<proteinExistence type="inferred from homology"/>
<accession>B7HY84</accession>
<organism>
    <name type="scientific">Bacillus cereus (strain AH187)</name>
    <dbReference type="NCBI Taxonomy" id="405534"/>
    <lineage>
        <taxon>Bacteria</taxon>
        <taxon>Bacillati</taxon>
        <taxon>Bacillota</taxon>
        <taxon>Bacilli</taxon>
        <taxon>Bacillales</taxon>
        <taxon>Bacillaceae</taxon>
        <taxon>Bacillus</taxon>
        <taxon>Bacillus cereus group</taxon>
    </lineage>
</organism>
<gene>
    <name evidence="1" type="primary">mntP</name>
    <name type="ordered locus">BCAH187_A5502</name>
</gene>
<protein>
    <recommendedName>
        <fullName evidence="1">Putative manganese efflux pump MntP</fullName>
    </recommendedName>
</protein>
<sequence length="182" mass="19710">MTFEQLIPLIIMAFALGMDAFSVSLGMGMMTLKIRQILYIGVTIGIFHIIMPFIGMVLGRFLSEQYGDIAHFAGAILLIGLGFYIVYSSILENEETRTAPIGISLFVFAFGVSIDSFSVGLSLGIYGAQTVITILLFGFISMLLAWTGLFIGRHAKGMLGTYGEIVGGIILVGFGLYLLFPI</sequence>
<dbReference type="EMBL" id="CP001177">
    <property type="protein sequence ID" value="ACJ79146.1"/>
    <property type="molecule type" value="Genomic_DNA"/>
</dbReference>
<dbReference type="KEGG" id="bcr:BCAH187_A5502"/>
<dbReference type="HOGENOM" id="CLU_096410_1_0_9"/>
<dbReference type="Proteomes" id="UP000002214">
    <property type="component" value="Chromosome"/>
</dbReference>
<dbReference type="GO" id="GO:0005886">
    <property type="term" value="C:plasma membrane"/>
    <property type="evidence" value="ECO:0007669"/>
    <property type="project" value="UniProtKB-SubCell"/>
</dbReference>
<dbReference type="GO" id="GO:0005384">
    <property type="term" value="F:manganese ion transmembrane transporter activity"/>
    <property type="evidence" value="ECO:0007669"/>
    <property type="project" value="UniProtKB-UniRule"/>
</dbReference>
<dbReference type="HAMAP" id="MF_01521">
    <property type="entry name" value="MntP_pump"/>
    <property type="match status" value="1"/>
</dbReference>
<dbReference type="InterPro" id="IPR003810">
    <property type="entry name" value="Mntp/YtaF"/>
</dbReference>
<dbReference type="InterPro" id="IPR022929">
    <property type="entry name" value="Put_MntP"/>
</dbReference>
<dbReference type="PANTHER" id="PTHR35529">
    <property type="entry name" value="MANGANESE EFFLUX PUMP MNTP-RELATED"/>
    <property type="match status" value="1"/>
</dbReference>
<dbReference type="PANTHER" id="PTHR35529:SF1">
    <property type="entry name" value="MANGANESE EFFLUX PUMP MNTP-RELATED"/>
    <property type="match status" value="1"/>
</dbReference>
<dbReference type="Pfam" id="PF02659">
    <property type="entry name" value="Mntp"/>
    <property type="match status" value="1"/>
</dbReference>
<evidence type="ECO:0000255" key="1">
    <source>
        <dbReference type="HAMAP-Rule" id="MF_01521"/>
    </source>
</evidence>
<comment type="function">
    <text evidence="1">Probably functions as a manganese efflux pump.</text>
</comment>
<comment type="subcellular location">
    <subcellularLocation>
        <location evidence="1">Cell membrane</location>
        <topology evidence="1">Multi-pass membrane protein</topology>
    </subcellularLocation>
</comment>
<comment type="similarity">
    <text evidence="1">Belongs to the MntP (TC 9.B.29) family.</text>
</comment>